<organism>
    <name type="scientific">Conus arenatus</name>
    <name type="common">Sand-dusted cone</name>
    <dbReference type="NCBI Taxonomy" id="89451"/>
    <lineage>
        <taxon>Eukaryota</taxon>
        <taxon>Metazoa</taxon>
        <taxon>Spiralia</taxon>
        <taxon>Lophotrochozoa</taxon>
        <taxon>Mollusca</taxon>
        <taxon>Gastropoda</taxon>
        <taxon>Caenogastropoda</taxon>
        <taxon>Neogastropoda</taxon>
        <taxon>Conoidea</taxon>
        <taxon>Conidae</taxon>
        <taxon>Conus</taxon>
    </lineage>
</organism>
<comment type="subcellular location">
    <subcellularLocation>
        <location evidence="3">Secreted</location>
    </subcellularLocation>
</comment>
<comment type="tissue specificity">
    <text evidence="3">Expressed by the venom duct.</text>
</comment>
<comment type="domain">
    <text evidence="2">The cysteine framework is V (CC-CC).</text>
</comment>
<comment type="PTM">
    <text evidence="2">Contains 2 disulfide bonds that can be either 'C1-C3, C2-C4' or 'C1-C4, C2-C3', since these disulfide connectivities have been observed for conotoxins with cysteine framework V (for examples, see AC P0DQQ7 and AC P81755).</text>
</comment>
<comment type="similarity">
    <text evidence="2">Belongs to the conotoxin T superfamily.</text>
</comment>
<sequence>MLCLPVFIILLLLASPAASNPLKTRIQSDLIRAALEDADMKNEKNILSSIMGSLGTIGNVVGNVCCSITKSCCASEE</sequence>
<name>CT51B_CONAE</name>
<protein>
    <recommendedName>
        <fullName evidence="2">Conotoxin Ar5.1 b</fullName>
    </recommendedName>
    <alternativeName>
        <fullName evidence="4">Conotoxin ArMLCL-021</fullName>
    </alternativeName>
</protein>
<keyword id="KW-1015">Disulfide bond</keyword>
<keyword id="KW-0528">Neurotoxin</keyword>
<keyword id="KW-0964">Secreted</keyword>
<keyword id="KW-0732">Signal</keyword>
<keyword id="KW-0800">Toxin</keyword>
<accession>Q9BP51</accession>
<feature type="signal peptide" evidence="1">
    <location>
        <begin position="1"/>
        <end position="19"/>
    </location>
</feature>
<feature type="propeptide" id="PRO_0000404936" evidence="1">
    <location>
        <begin position="20"/>
        <end position="44"/>
    </location>
</feature>
<feature type="peptide" id="PRO_0000404937" description="Conotoxin Ar5.1 b" evidence="1">
    <location>
        <begin position="45"/>
        <end position="77"/>
    </location>
</feature>
<evidence type="ECO:0000255" key="1"/>
<evidence type="ECO:0000305" key="2"/>
<evidence type="ECO:0000305" key="3">
    <source>
    </source>
</evidence>
<evidence type="ECO:0000312" key="4">
    <source>
        <dbReference type="EMBL" id="AAG60523.1"/>
    </source>
</evidence>
<reference key="1">
    <citation type="journal article" date="2001" name="Mol. Biol. Evol.">
        <title>Mechanisms for evolving hypervariability: the case of conopeptides.</title>
        <authorList>
            <person name="Conticello S.G."/>
            <person name="Gilad Y."/>
            <person name="Avidan N."/>
            <person name="Ben-Asher E."/>
            <person name="Levy Z."/>
            <person name="Fainzilber M."/>
        </authorList>
    </citation>
    <scope>NUCLEOTIDE SEQUENCE [MRNA]</scope>
    <source>
        <tissue>Venom duct</tissue>
    </source>
</reference>
<proteinExistence type="inferred from homology"/>
<dbReference type="EMBL" id="AF215102">
    <property type="protein sequence ID" value="AAG60523.1"/>
    <property type="molecule type" value="mRNA"/>
</dbReference>
<dbReference type="ConoServer" id="780">
    <property type="toxin name" value="Ar5.1 precursor"/>
</dbReference>
<dbReference type="GO" id="GO:0005576">
    <property type="term" value="C:extracellular region"/>
    <property type="evidence" value="ECO:0007669"/>
    <property type="project" value="UniProtKB-SubCell"/>
</dbReference>
<dbReference type="GO" id="GO:0008200">
    <property type="term" value="F:ion channel inhibitor activity"/>
    <property type="evidence" value="ECO:0007669"/>
    <property type="project" value="InterPro"/>
</dbReference>
<dbReference type="GO" id="GO:0090729">
    <property type="term" value="F:toxin activity"/>
    <property type="evidence" value="ECO:0007669"/>
    <property type="project" value="UniProtKB-KW"/>
</dbReference>
<dbReference type="InterPro" id="IPR004214">
    <property type="entry name" value="Conotoxin"/>
</dbReference>
<dbReference type="Pfam" id="PF02950">
    <property type="entry name" value="Conotoxin"/>
    <property type="match status" value="1"/>
</dbReference>